<sequence length="196" mass="22423">MKPQVVFVLGGPGAGKGTQCARIVENYSYTHLSAGDLLREERSRTDSEFGQLIDSYIKEGKIVPVQITINLLRKAMEETMKADEKKFRFLIDGFPRNQDNLQGWNTEMDGKADVKFVLFFDCSNEVCIDRCLERGKSSGRTDDNRESLEKRIQTYLQSTRPIIELYEKQGKVQRIDASRSVDEVFADVKNILEKDD</sequence>
<name>KCY_DANRE</name>
<evidence type="ECO:0000255" key="1">
    <source>
        <dbReference type="HAMAP-Rule" id="MF_03172"/>
    </source>
</evidence>
<evidence type="ECO:0000305" key="2"/>
<accession>Q7ZWE9</accession>
<proteinExistence type="evidence at transcript level"/>
<keyword id="KW-0067">ATP-binding</keyword>
<keyword id="KW-0963">Cytoplasm</keyword>
<keyword id="KW-0418">Kinase</keyword>
<keyword id="KW-0547">Nucleotide-binding</keyword>
<keyword id="KW-0539">Nucleus</keyword>
<keyword id="KW-0665">Pyrimidine biosynthesis</keyword>
<keyword id="KW-1185">Reference proteome</keyword>
<keyword id="KW-0808">Transferase</keyword>
<reference key="1">
    <citation type="submission" date="2003-03" db="EMBL/GenBank/DDBJ databases">
        <authorList>
            <consortium name="NIH - Zebrafish Gene Collection (ZGC) project"/>
        </authorList>
    </citation>
    <scope>NUCLEOTIDE SEQUENCE [LARGE SCALE MRNA]</scope>
</reference>
<dbReference type="EC" id="2.7.4.14" evidence="1"/>
<dbReference type="EC" id="2.7.4.6" evidence="1"/>
<dbReference type="EMBL" id="BC049446">
    <property type="protein sequence ID" value="AAH49446.1"/>
    <property type="status" value="ALT_INIT"/>
    <property type="molecule type" value="mRNA"/>
</dbReference>
<dbReference type="SMR" id="Q7ZWE9"/>
<dbReference type="FunCoup" id="Q7ZWE9">
    <property type="interactions" value="2211"/>
</dbReference>
<dbReference type="STRING" id="7955.ENSDARP00000008412"/>
<dbReference type="PaxDb" id="7955-ENSDARP00000113335"/>
<dbReference type="PeptideAtlas" id="Q7ZWE9"/>
<dbReference type="AGR" id="ZFIN:ZDB-GENE-040426-2113"/>
<dbReference type="ZFIN" id="ZDB-GENE-040426-2113">
    <property type="gene designation" value="cmpk"/>
</dbReference>
<dbReference type="eggNOG" id="KOG3079">
    <property type="taxonomic scope" value="Eukaryota"/>
</dbReference>
<dbReference type="InParanoid" id="Q7ZWE9"/>
<dbReference type="OrthoDB" id="442176at2759"/>
<dbReference type="Reactome" id="R-DRE-499943">
    <property type="pathway name" value="Interconversion of nucleotide di- and triphosphates"/>
</dbReference>
<dbReference type="PRO" id="PR:Q7ZWE9"/>
<dbReference type="Proteomes" id="UP000000437">
    <property type="component" value="Unplaced"/>
</dbReference>
<dbReference type="GO" id="GO:0005737">
    <property type="term" value="C:cytoplasm"/>
    <property type="evidence" value="ECO:0000318"/>
    <property type="project" value="GO_Central"/>
</dbReference>
<dbReference type="GO" id="GO:0005634">
    <property type="term" value="C:nucleus"/>
    <property type="evidence" value="ECO:0000318"/>
    <property type="project" value="GO_Central"/>
</dbReference>
<dbReference type="GO" id="GO:0004127">
    <property type="term" value="F:(d)CMP kinase activity"/>
    <property type="evidence" value="ECO:0000318"/>
    <property type="project" value="GO_Central"/>
</dbReference>
<dbReference type="GO" id="GO:0005524">
    <property type="term" value="F:ATP binding"/>
    <property type="evidence" value="ECO:0007669"/>
    <property type="project" value="UniProtKB-KW"/>
</dbReference>
<dbReference type="GO" id="GO:0036430">
    <property type="term" value="F:CMP kinase activity"/>
    <property type="evidence" value="ECO:0007669"/>
    <property type="project" value="RHEA"/>
</dbReference>
<dbReference type="GO" id="GO:0036431">
    <property type="term" value="F:dCMP kinase activity"/>
    <property type="evidence" value="ECO:0007669"/>
    <property type="project" value="RHEA"/>
</dbReference>
<dbReference type="GO" id="GO:0004550">
    <property type="term" value="F:nucleoside diphosphate kinase activity"/>
    <property type="evidence" value="ECO:0000250"/>
    <property type="project" value="UniProtKB"/>
</dbReference>
<dbReference type="GO" id="GO:0033862">
    <property type="term" value="F:UMP kinase activity"/>
    <property type="evidence" value="ECO:0000318"/>
    <property type="project" value="GO_Central"/>
</dbReference>
<dbReference type="GO" id="GO:0006207">
    <property type="term" value="P:'de novo' pyrimidine nucleobase biosynthetic process"/>
    <property type="evidence" value="ECO:0007669"/>
    <property type="project" value="InterPro"/>
</dbReference>
<dbReference type="GO" id="GO:0046705">
    <property type="term" value="P:CDP biosynthetic process"/>
    <property type="evidence" value="ECO:0000318"/>
    <property type="project" value="GO_Central"/>
</dbReference>
<dbReference type="GO" id="GO:0006225">
    <property type="term" value="P:UDP biosynthetic process"/>
    <property type="evidence" value="ECO:0000318"/>
    <property type="project" value="GO_Central"/>
</dbReference>
<dbReference type="CDD" id="cd01428">
    <property type="entry name" value="ADK"/>
    <property type="match status" value="1"/>
</dbReference>
<dbReference type="FunFam" id="3.40.50.300:FF:000315">
    <property type="entry name" value="Adenylate kinase 1"/>
    <property type="match status" value="1"/>
</dbReference>
<dbReference type="Gene3D" id="3.40.50.300">
    <property type="entry name" value="P-loop containing nucleotide triphosphate hydrolases"/>
    <property type="match status" value="1"/>
</dbReference>
<dbReference type="HAMAP" id="MF_00235">
    <property type="entry name" value="Adenylate_kinase_Adk"/>
    <property type="match status" value="1"/>
</dbReference>
<dbReference type="HAMAP" id="MF_03172">
    <property type="entry name" value="Adenylate_kinase_UMP_CMP_kin"/>
    <property type="match status" value="1"/>
</dbReference>
<dbReference type="InterPro" id="IPR000850">
    <property type="entry name" value="Adenylat/UMP-CMP_kin"/>
</dbReference>
<dbReference type="InterPro" id="IPR033690">
    <property type="entry name" value="Adenylat_kinase_CS"/>
</dbReference>
<dbReference type="InterPro" id="IPR027417">
    <property type="entry name" value="P-loop_NTPase"/>
</dbReference>
<dbReference type="InterPro" id="IPR006266">
    <property type="entry name" value="UMP_CMP_kinase"/>
</dbReference>
<dbReference type="NCBIfam" id="TIGR01359">
    <property type="entry name" value="UMP_CMP_kin_fam"/>
    <property type="match status" value="1"/>
</dbReference>
<dbReference type="PANTHER" id="PTHR23359">
    <property type="entry name" value="NUCLEOTIDE KINASE"/>
    <property type="match status" value="1"/>
</dbReference>
<dbReference type="Pfam" id="PF00406">
    <property type="entry name" value="ADK"/>
    <property type="match status" value="1"/>
</dbReference>
<dbReference type="PRINTS" id="PR00094">
    <property type="entry name" value="ADENYLTKNASE"/>
</dbReference>
<dbReference type="SUPFAM" id="SSF52540">
    <property type="entry name" value="P-loop containing nucleoside triphosphate hydrolases"/>
    <property type="match status" value="1"/>
</dbReference>
<dbReference type="PROSITE" id="PS00113">
    <property type="entry name" value="ADENYLATE_KINASE"/>
    <property type="match status" value="1"/>
</dbReference>
<feature type="chain" id="PRO_0000292025" description="UMP-CMP kinase">
    <location>
        <begin position="1"/>
        <end position="196"/>
    </location>
</feature>
<feature type="region of interest" description="NMP" evidence="1">
    <location>
        <begin position="33"/>
        <end position="63"/>
    </location>
</feature>
<feature type="region of interest" description="LID" evidence="1">
    <location>
        <begin position="133"/>
        <end position="143"/>
    </location>
</feature>
<feature type="binding site" evidence="1">
    <location>
        <begin position="13"/>
        <end position="18"/>
    </location>
    <ligand>
        <name>ATP</name>
        <dbReference type="ChEBI" id="CHEBI:30616"/>
    </ligand>
</feature>
<feature type="binding site" evidence="1">
    <location>
        <position position="39"/>
    </location>
    <ligand>
        <name>a ribonucleoside 5'-phosphate</name>
        <dbReference type="ChEBI" id="CHEBI:58043"/>
    </ligand>
</feature>
<feature type="binding site" evidence="1">
    <location>
        <begin position="61"/>
        <end position="63"/>
    </location>
    <ligand>
        <name>a ribonucleoside 5'-phosphate</name>
        <dbReference type="ChEBI" id="CHEBI:58043"/>
    </ligand>
</feature>
<feature type="binding site" evidence="1">
    <location>
        <begin position="93"/>
        <end position="96"/>
    </location>
    <ligand>
        <name>a ribonucleoside 5'-phosphate</name>
        <dbReference type="ChEBI" id="CHEBI:58043"/>
    </ligand>
</feature>
<feature type="binding site" evidence="1">
    <location>
        <position position="100"/>
    </location>
    <ligand>
        <name>CMP</name>
        <dbReference type="ChEBI" id="CHEBI:60377"/>
    </ligand>
</feature>
<feature type="binding site" evidence="1">
    <location>
        <position position="134"/>
    </location>
    <ligand>
        <name>ATP</name>
        <dbReference type="ChEBI" id="CHEBI:30616"/>
    </ligand>
</feature>
<feature type="binding site" evidence="1">
    <location>
        <position position="140"/>
    </location>
    <ligand>
        <name>a ribonucleoside 5'-phosphate</name>
        <dbReference type="ChEBI" id="CHEBI:58043"/>
    </ligand>
</feature>
<feature type="binding site" evidence="1">
    <location>
        <position position="151"/>
    </location>
    <ligand>
        <name>a ribonucleoside 5'-phosphate</name>
        <dbReference type="ChEBI" id="CHEBI:58043"/>
    </ligand>
</feature>
<feature type="binding site" evidence="1">
    <location>
        <position position="179"/>
    </location>
    <ligand>
        <name>ATP</name>
        <dbReference type="ChEBI" id="CHEBI:30616"/>
    </ligand>
</feature>
<gene>
    <name type="primary">cmpk</name>
    <name type="synonym">cmpk1</name>
</gene>
<comment type="function">
    <text evidence="1">Catalyzes the phosphorylation of pyrimidine nucleoside monophosphates at the expense of ATP. Plays an important role in de novo pyrimidine nucleotide biosynthesis. Has preference for UMP and CMP as phosphate acceptors. Also displays broad nucleoside diphosphate kinase activity.</text>
</comment>
<comment type="catalytic activity">
    <reaction evidence="1">
        <text>CMP + ATP = CDP + ADP</text>
        <dbReference type="Rhea" id="RHEA:11600"/>
        <dbReference type="ChEBI" id="CHEBI:30616"/>
        <dbReference type="ChEBI" id="CHEBI:58069"/>
        <dbReference type="ChEBI" id="CHEBI:60377"/>
        <dbReference type="ChEBI" id="CHEBI:456216"/>
        <dbReference type="EC" id="2.7.4.14"/>
    </reaction>
</comment>
<comment type="catalytic activity">
    <reaction evidence="1">
        <text>dCMP + ATP = dCDP + ADP</text>
        <dbReference type="Rhea" id="RHEA:25094"/>
        <dbReference type="ChEBI" id="CHEBI:30616"/>
        <dbReference type="ChEBI" id="CHEBI:57566"/>
        <dbReference type="ChEBI" id="CHEBI:58593"/>
        <dbReference type="ChEBI" id="CHEBI:456216"/>
        <dbReference type="EC" id="2.7.4.14"/>
    </reaction>
</comment>
<comment type="catalytic activity">
    <reaction evidence="1">
        <text>UMP + ATP = UDP + ADP</text>
        <dbReference type="Rhea" id="RHEA:24400"/>
        <dbReference type="ChEBI" id="CHEBI:30616"/>
        <dbReference type="ChEBI" id="CHEBI:57865"/>
        <dbReference type="ChEBI" id="CHEBI:58223"/>
        <dbReference type="ChEBI" id="CHEBI:456216"/>
        <dbReference type="EC" id="2.7.4.14"/>
    </reaction>
</comment>
<comment type="catalytic activity">
    <reaction evidence="1">
        <text>a 2'-deoxyribonucleoside 5'-diphosphate + ATP = a 2'-deoxyribonucleoside 5'-triphosphate + ADP</text>
        <dbReference type="Rhea" id="RHEA:44640"/>
        <dbReference type="ChEBI" id="CHEBI:30616"/>
        <dbReference type="ChEBI" id="CHEBI:61560"/>
        <dbReference type="ChEBI" id="CHEBI:73316"/>
        <dbReference type="ChEBI" id="CHEBI:456216"/>
        <dbReference type="EC" id="2.7.4.6"/>
    </reaction>
</comment>
<comment type="catalytic activity">
    <reaction evidence="1">
        <text>a ribonucleoside 5'-diphosphate + ATP = a ribonucleoside 5'-triphosphate + ADP</text>
        <dbReference type="Rhea" id="RHEA:18113"/>
        <dbReference type="ChEBI" id="CHEBI:30616"/>
        <dbReference type="ChEBI" id="CHEBI:57930"/>
        <dbReference type="ChEBI" id="CHEBI:61557"/>
        <dbReference type="ChEBI" id="CHEBI:456216"/>
        <dbReference type="EC" id="2.7.4.6"/>
    </reaction>
</comment>
<comment type="cofactor">
    <cofactor evidence="1">
        <name>Mg(2+)</name>
        <dbReference type="ChEBI" id="CHEBI:18420"/>
    </cofactor>
    <text evidence="1">Binds 1 Mg(2+) ion per monomer.</text>
</comment>
<comment type="subunit">
    <text evidence="1">Monomer.</text>
</comment>
<comment type="subcellular location">
    <subcellularLocation>
        <location evidence="1">Nucleus</location>
    </subcellularLocation>
    <subcellularLocation>
        <location evidence="1">Cytoplasm</location>
    </subcellularLocation>
    <text evidence="1">Predominantly nuclear.</text>
</comment>
<comment type="domain">
    <text evidence="1">Consists of three domains, a large central CORE domain and two small peripheral domains, NMPbind and LID, which undergo movements during catalysis. The LID domain closes over the site of phosphoryl transfer upon ATP binding. Assembling and dissambling the active center during each catalytic cycle provides an effective means to prevent ATP hydrolysis.</text>
</comment>
<comment type="similarity">
    <text evidence="1">Belongs to the adenylate kinase family. UMP-CMP kinase subfamily.</text>
</comment>
<comment type="sequence caution" evidence="2">
    <conflict type="erroneous initiation">
        <sequence resource="EMBL-CDS" id="AAH49446"/>
    </conflict>
</comment>
<protein>
    <recommendedName>
        <fullName evidence="1">UMP-CMP kinase</fullName>
        <ecNumber evidence="1">2.7.4.14</ecNumber>
    </recommendedName>
    <alternativeName>
        <fullName evidence="1">Deoxycytidylate kinase</fullName>
        <shortName evidence="1">CK</shortName>
        <shortName evidence="1">dCMP kinase</shortName>
    </alternativeName>
    <alternativeName>
        <fullName evidence="1">Nucleoside-diphosphate kinase</fullName>
        <ecNumber evidence="1">2.7.4.6</ecNumber>
    </alternativeName>
    <alternativeName>
        <fullName evidence="1">Uridine monophosphate/cytidine monophosphate kinase</fullName>
        <shortName evidence="1">UMP/CMP kinase</shortName>
        <shortName evidence="1">UMP/CMPK</shortName>
    </alternativeName>
</protein>
<organism>
    <name type="scientific">Danio rerio</name>
    <name type="common">Zebrafish</name>
    <name type="synonym">Brachydanio rerio</name>
    <dbReference type="NCBI Taxonomy" id="7955"/>
    <lineage>
        <taxon>Eukaryota</taxon>
        <taxon>Metazoa</taxon>
        <taxon>Chordata</taxon>
        <taxon>Craniata</taxon>
        <taxon>Vertebrata</taxon>
        <taxon>Euteleostomi</taxon>
        <taxon>Actinopterygii</taxon>
        <taxon>Neopterygii</taxon>
        <taxon>Teleostei</taxon>
        <taxon>Ostariophysi</taxon>
        <taxon>Cypriniformes</taxon>
        <taxon>Danionidae</taxon>
        <taxon>Danioninae</taxon>
        <taxon>Danio</taxon>
    </lineage>
</organism>